<keyword id="KW-0227">DNA damage</keyword>
<keyword id="KW-0234">DNA repair</keyword>
<keyword id="KW-0235">DNA replication</keyword>
<keyword id="KW-0436">Ligase</keyword>
<keyword id="KW-0460">Magnesium</keyword>
<keyword id="KW-0464">Manganese</keyword>
<keyword id="KW-0479">Metal-binding</keyword>
<keyword id="KW-0520">NAD</keyword>
<keyword id="KW-1185">Reference proteome</keyword>
<keyword id="KW-0862">Zinc</keyword>
<evidence type="ECO:0000255" key="1">
    <source>
        <dbReference type="HAMAP-Rule" id="MF_01588"/>
    </source>
</evidence>
<evidence type="ECO:0000256" key="2">
    <source>
        <dbReference type="SAM" id="MobiDB-lite"/>
    </source>
</evidence>
<reference key="1">
    <citation type="journal article" date="2004" name="Nature">
        <title>Genome sequence of Silicibacter pomeroyi reveals adaptations to the marine environment.</title>
        <authorList>
            <person name="Moran M.A."/>
            <person name="Buchan A."/>
            <person name="Gonzalez J.M."/>
            <person name="Heidelberg J.F."/>
            <person name="Whitman W.B."/>
            <person name="Kiene R.P."/>
            <person name="Henriksen J.R."/>
            <person name="King G.M."/>
            <person name="Belas R."/>
            <person name="Fuqua C."/>
            <person name="Brinkac L.M."/>
            <person name="Lewis M."/>
            <person name="Johri S."/>
            <person name="Weaver B."/>
            <person name="Pai G."/>
            <person name="Eisen J.A."/>
            <person name="Rahe E."/>
            <person name="Sheldon W.M."/>
            <person name="Ye W."/>
            <person name="Miller T.R."/>
            <person name="Carlton J."/>
            <person name="Rasko D.A."/>
            <person name="Paulsen I.T."/>
            <person name="Ren Q."/>
            <person name="Daugherty S.C."/>
            <person name="DeBoy R.T."/>
            <person name="Dodson R.J."/>
            <person name="Durkin A.S."/>
            <person name="Madupu R."/>
            <person name="Nelson W.C."/>
            <person name="Sullivan S.A."/>
            <person name="Rosovitz M.J."/>
            <person name="Haft D.H."/>
            <person name="Selengut J."/>
            <person name="Ward N."/>
        </authorList>
    </citation>
    <scope>NUCLEOTIDE SEQUENCE [LARGE SCALE GENOMIC DNA]</scope>
    <source>
        <strain>ATCC 700808 / DSM 15171 / DSS-3</strain>
    </source>
</reference>
<reference key="2">
    <citation type="journal article" date="2014" name="Stand. Genomic Sci.">
        <title>An updated genome annotation for the model marine bacterium Ruegeria pomeroyi DSS-3.</title>
        <authorList>
            <person name="Rivers A.R."/>
            <person name="Smith C.B."/>
            <person name="Moran M.A."/>
        </authorList>
    </citation>
    <scope>GENOME REANNOTATION</scope>
    <source>
        <strain>ATCC 700808 / DSM 15171 / DSS-3</strain>
    </source>
</reference>
<dbReference type="EC" id="6.5.1.2" evidence="1"/>
<dbReference type="EMBL" id="CP000031">
    <property type="protein sequence ID" value="AAV94965.1"/>
    <property type="molecule type" value="Genomic_DNA"/>
</dbReference>
<dbReference type="RefSeq" id="WP_011047415.1">
    <property type="nucleotide sequence ID" value="NC_003911.12"/>
</dbReference>
<dbReference type="SMR" id="Q5LST6"/>
<dbReference type="STRING" id="246200.SPO1680"/>
<dbReference type="PaxDb" id="246200-SPO1680"/>
<dbReference type="KEGG" id="sil:SPO1680"/>
<dbReference type="eggNOG" id="COG0272">
    <property type="taxonomic scope" value="Bacteria"/>
</dbReference>
<dbReference type="HOGENOM" id="CLU_007764_2_1_5"/>
<dbReference type="OrthoDB" id="9759736at2"/>
<dbReference type="Proteomes" id="UP000001023">
    <property type="component" value="Chromosome"/>
</dbReference>
<dbReference type="GO" id="GO:0005829">
    <property type="term" value="C:cytosol"/>
    <property type="evidence" value="ECO:0007669"/>
    <property type="project" value="TreeGrafter"/>
</dbReference>
<dbReference type="GO" id="GO:0003911">
    <property type="term" value="F:DNA ligase (NAD+) activity"/>
    <property type="evidence" value="ECO:0007669"/>
    <property type="project" value="UniProtKB-UniRule"/>
</dbReference>
<dbReference type="GO" id="GO:0046872">
    <property type="term" value="F:metal ion binding"/>
    <property type="evidence" value="ECO:0007669"/>
    <property type="project" value="UniProtKB-KW"/>
</dbReference>
<dbReference type="GO" id="GO:0006281">
    <property type="term" value="P:DNA repair"/>
    <property type="evidence" value="ECO:0007669"/>
    <property type="project" value="UniProtKB-KW"/>
</dbReference>
<dbReference type="GO" id="GO:0006260">
    <property type="term" value="P:DNA replication"/>
    <property type="evidence" value="ECO:0007669"/>
    <property type="project" value="UniProtKB-KW"/>
</dbReference>
<dbReference type="CDD" id="cd17748">
    <property type="entry name" value="BRCT_DNA_ligase_like"/>
    <property type="match status" value="1"/>
</dbReference>
<dbReference type="CDD" id="cd00114">
    <property type="entry name" value="LIGANc"/>
    <property type="match status" value="1"/>
</dbReference>
<dbReference type="FunFam" id="1.10.150.20:FF:000007">
    <property type="entry name" value="DNA ligase"/>
    <property type="match status" value="1"/>
</dbReference>
<dbReference type="FunFam" id="3.30.470.30:FF:000001">
    <property type="entry name" value="DNA ligase"/>
    <property type="match status" value="1"/>
</dbReference>
<dbReference type="Gene3D" id="6.20.10.30">
    <property type="match status" value="1"/>
</dbReference>
<dbReference type="Gene3D" id="1.10.150.20">
    <property type="entry name" value="5' to 3' exonuclease, C-terminal subdomain"/>
    <property type="match status" value="2"/>
</dbReference>
<dbReference type="Gene3D" id="3.40.50.10190">
    <property type="entry name" value="BRCT domain"/>
    <property type="match status" value="1"/>
</dbReference>
<dbReference type="Gene3D" id="3.30.470.30">
    <property type="entry name" value="DNA ligase/mRNA capping enzyme"/>
    <property type="match status" value="1"/>
</dbReference>
<dbReference type="Gene3D" id="1.10.287.610">
    <property type="entry name" value="Helix hairpin bin"/>
    <property type="match status" value="1"/>
</dbReference>
<dbReference type="Gene3D" id="2.40.50.140">
    <property type="entry name" value="Nucleic acid-binding proteins"/>
    <property type="match status" value="1"/>
</dbReference>
<dbReference type="HAMAP" id="MF_01588">
    <property type="entry name" value="DNA_ligase_A"/>
    <property type="match status" value="1"/>
</dbReference>
<dbReference type="InterPro" id="IPR001357">
    <property type="entry name" value="BRCT_dom"/>
</dbReference>
<dbReference type="InterPro" id="IPR036420">
    <property type="entry name" value="BRCT_dom_sf"/>
</dbReference>
<dbReference type="InterPro" id="IPR041663">
    <property type="entry name" value="DisA/LigA_HHH"/>
</dbReference>
<dbReference type="InterPro" id="IPR001679">
    <property type="entry name" value="DNA_ligase"/>
</dbReference>
<dbReference type="InterPro" id="IPR018239">
    <property type="entry name" value="DNA_ligase_AS"/>
</dbReference>
<dbReference type="InterPro" id="IPR033136">
    <property type="entry name" value="DNA_ligase_CS"/>
</dbReference>
<dbReference type="InterPro" id="IPR013839">
    <property type="entry name" value="DNAligase_adenylation"/>
</dbReference>
<dbReference type="InterPro" id="IPR013840">
    <property type="entry name" value="DNAligase_N"/>
</dbReference>
<dbReference type="InterPro" id="IPR012340">
    <property type="entry name" value="NA-bd_OB-fold"/>
</dbReference>
<dbReference type="InterPro" id="IPR004150">
    <property type="entry name" value="NAD_DNA_ligase_OB"/>
</dbReference>
<dbReference type="InterPro" id="IPR010994">
    <property type="entry name" value="RuvA_2-like"/>
</dbReference>
<dbReference type="InterPro" id="IPR004149">
    <property type="entry name" value="Znf_DNAligase_C4"/>
</dbReference>
<dbReference type="NCBIfam" id="TIGR00575">
    <property type="entry name" value="dnlj"/>
    <property type="match status" value="1"/>
</dbReference>
<dbReference type="NCBIfam" id="NF005932">
    <property type="entry name" value="PRK07956.1"/>
    <property type="match status" value="1"/>
</dbReference>
<dbReference type="PANTHER" id="PTHR23389">
    <property type="entry name" value="CHROMOSOME TRANSMISSION FIDELITY FACTOR 18"/>
    <property type="match status" value="1"/>
</dbReference>
<dbReference type="PANTHER" id="PTHR23389:SF9">
    <property type="entry name" value="DNA LIGASE"/>
    <property type="match status" value="1"/>
</dbReference>
<dbReference type="Pfam" id="PF00533">
    <property type="entry name" value="BRCT"/>
    <property type="match status" value="1"/>
</dbReference>
<dbReference type="Pfam" id="PF01653">
    <property type="entry name" value="DNA_ligase_aden"/>
    <property type="match status" value="1"/>
</dbReference>
<dbReference type="Pfam" id="PF03120">
    <property type="entry name" value="DNA_ligase_OB"/>
    <property type="match status" value="1"/>
</dbReference>
<dbReference type="Pfam" id="PF03119">
    <property type="entry name" value="DNA_ligase_ZBD"/>
    <property type="match status" value="1"/>
</dbReference>
<dbReference type="Pfam" id="PF12826">
    <property type="entry name" value="HHH_2"/>
    <property type="match status" value="1"/>
</dbReference>
<dbReference type="PIRSF" id="PIRSF001604">
    <property type="entry name" value="LigA"/>
    <property type="match status" value="1"/>
</dbReference>
<dbReference type="SMART" id="SM00292">
    <property type="entry name" value="BRCT"/>
    <property type="match status" value="1"/>
</dbReference>
<dbReference type="SMART" id="SM00532">
    <property type="entry name" value="LIGANc"/>
    <property type="match status" value="1"/>
</dbReference>
<dbReference type="SUPFAM" id="SSF52113">
    <property type="entry name" value="BRCT domain"/>
    <property type="match status" value="1"/>
</dbReference>
<dbReference type="SUPFAM" id="SSF56091">
    <property type="entry name" value="DNA ligase/mRNA capping enzyme, catalytic domain"/>
    <property type="match status" value="1"/>
</dbReference>
<dbReference type="SUPFAM" id="SSF50249">
    <property type="entry name" value="Nucleic acid-binding proteins"/>
    <property type="match status" value="1"/>
</dbReference>
<dbReference type="SUPFAM" id="SSF47781">
    <property type="entry name" value="RuvA domain 2-like"/>
    <property type="match status" value="1"/>
</dbReference>
<dbReference type="PROSITE" id="PS50172">
    <property type="entry name" value="BRCT"/>
    <property type="match status" value="1"/>
</dbReference>
<dbReference type="PROSITE" id="PS01055">
    <property type="entry name" value="DNA_LIGASE_N1"/>
    <property type="match status" value="1"/>
</dbReference>
<dbReference type="PROSITE" id="PS01056">
    <property type="entry name" value="DNA_LIGASE_N2"/>
    <property type="match status" value="1"/>
</dbReference>
<protein>
    <recommendedName>
        <fullName evidence="1">DNA ligase</fullName>
        <ecNumber evidence="1">6.5.1.2</ecNumber>
    </recommendedName>
    <alternativeName>
        <fullName evidence="1">Polydeoxyribonucleotide synthase [NAD(+)]</fullName>
    </alternativeName>
</protein>
<feature type="chain" id="PRO_0000313439" description="DNA ligase">
    <location>
        <begin position="1"/>
        <end position="739"/>
    </location>
</feature>
<feature type="domain" description="BRCT" evidence="1">
    <location>
        <begin position="660"/>
        <end position="739"/>
    </location>
</feature>
<feature type="region of interest" description="Disordered" evidence="2">
    <location>
        <begin position="49"/>
        <end position="70"/>
    </location>
</feature>
<feature type="compositionally biased region" description="Basic and acidic residues" evidence="2">
    <location>
        <begin position="49"/>
        <end position="59"/>
    </location>
</feature>
<feature type="active site" description="N6-AMP-lysine intermediate" evidence="1">
    <location>
        <position position="119"/>
    </location>
</feature>
<feature type="binding site" evidence="1">
    <location>
        <begin position="34"/>
        <end position="38"/>
    </location>
    <ligand>
        <name>NAD(+)</name>
        <dbReference type="ChEBI" id="CHEBI:57540"/>
    </ligand>
</feature>
<feature type="binding site" evidence="1">
    <location>
        <begin position="83"/>
        <end position="84"/>
    </location>
    <ligand>
        <name>NAD(+)</name>
        <dbReference type="ChEBI" id="CHEBI:57540"/>
    </ligand>
</feature>
<feature type="binding site" evidence="1">
    <location>
        <position position="117"/>
    </location>
    <ligand>
        <name>NAD(+)</name>
        <dbReference type="ChEBI" id="CHEBI:57540"/>
    </ligand>
</feature>
<feature type="binding site" evidence="1">
    <location>
        <position position="140"/>
    </location>
    <ligand>
        <name>NAD(+)</name>
        <dbReference type="ChEBI" id="CHEBI:57540"/>
    </ligand>
</feature>
<feature type="binding site" evidence="1">
    <location>
        <position position="175"/>
    </location>
    <ligand>
        <name>NAD(+)</name>
        <dbReference type="ChEBI" id="CHEBI:57540"/>
    </ligand>
</feature>
<feature type="binding site" evidence="1">
    <location>
        <position position="291"/>
    </location>
    <ligand>
        <name>NAD(+)</name>
        <dbReference type="ChEBI" id="CHEBI:57540"/>
    </ligand>
</feature>
<feature type="binding site" evidence="1">
    <location>
        <position position="315"/>
    </location>
    <ligand>
        <name>NAD(+)</name>
        <dbReference type="ChEBI" id="CHEBI:57540"/>
    </ligand>
</feature>
<feature type="binding site" evidence="1">
    <location>
        <position position="420"/>
    </location>
    <ligand>
        <name>Zn(2+)</name>
        <dbReference type="ChEBI" id="CHEBI:29105"/>
    </ligand>
</feature>
<feature type="binding site" evidence="1">
    <location>
        <position position="423"/>
    </location>
    <ligand>
        <name>Zn(2+)</name>
        <dbReference type="ChEBI" id="CHEBI:29105"/>
    </ligand>
</feature>
<feature type="binding site" evidence="1">
    <location>
        <position position="438"/>
    </location>
    <ligand>
        <name>Zn(2+)</name>
        <dbReference type="ChEBI" id="CHEBI:29105"/>
    </ligand>
</feature>
<feature type="binding site" evidence="1">
    <location>
        <position position="444"/>
    </location>
    <ligand>
        <name>Zn(2+)</name>
        <dbReference type="ChEBI" id="CHEBI:29105"/>
    </ligand>
</feature>
<name>DNLJ_RUEPO</name>
<comment type="function">
    <text evidence="1">DNA ligase that catalyzes the formation of phosphodiester linkages between 5'-phosphoryl and 3'-hydroxyl groups in double-stranded DNA using NAD as a coenzyme and as the energy source for the reaction. It is essential for DNA replication and repair of damaged DNA.</text>
</comment>
<comment type="catalytic activity">
    <reaction evidence="1">
        <text>NAD(+) + (deoxyribonucleotide)n-3'-hydroxyl + 5'-phospho-(deoxyribonucleotide)m = (deoxyribonucleotide)n+m + AMP + beta-nicotinamide D-nucleotide.</text>
        <dbReference type="EC" id="6.5.1.2"/>
    </reaction>
</comment>
<comment type="cofactor">
    <cofactor evidence="1">
        <name>Mg(2+)</name>
        <dbReference type="ChEBI" id="CHEBI:18420"/>
    </cofactor>
    <cofactor evidence="1">
        <name>Mn(2+)</name>
        <dbReference type="ChEBI" id="CHEBI:29035"/>
    </cofactor>
</comment>
<comment type="similarity">
    <text evidence="1">Belongs to the NAD-dependent DNA ligase family. LigA subfamily.</text>
</comment>
<proteinExistence type="inferred from homology"/>
<gene>
    <name evidence="1" type="primary">ligA</name>
    <name type="ordered locus">SPO1680</name>
</gene>
<accession>Q5LST6</accession>
<organism>
    <name type="scientific">Ruegeria pomeroyi (strain ATCC 700808 / DSM 15171 / DSS-3)</name>
    <name type="common">Silicibacter pomeroyi</name>
    <dbReference type="NCBI Taxonomy" id="246200"/>
    <lineage>
        <taxon>Bacteria</taxon>
        <taxon>Pseudomonadati</taxon>
        <taxon>Pseudomonadota</taxon>
        <taxon>Alphaproteobacteria</taxon>
        <taxon>Rhodobacterales</taxon>
        <taxon>Roseobacteraceae</taxon>
        <taxon>Ruegeria</taxon>
    </lineage>
</organism>
<sequence>MTEAEAAQELARLAGLLAQANLAYHTLDAPEISDADYDALKQRNAEIEARFPHLKRPDSPSEQVGARPGEGFSKVSHAVRMMSLGNAFDDADVADFDRSIRKYLGLDVETALAYTAEPKIDGLSLSLRYEQGVLVQAATRGDGEVGENVTANARTIADIPARIEGAPEVLEVRGEVYMSHADFAALNTRQEAEGGKLFANPRNAAAGSLRQLDAAITRARPLRFFAYSWGELSEPLAETQMQAIERLAGLGFQTNPLTRRCADLDAMIAHYRDIEAQRATLGYDIDGVVYKLDDLGLQARLGFRSTTPRWAIAHKFPAELAWTRLEAIDIQVGRTGALSPVARLTPVTVGGVVVSNATLHNEDYIAGRDSRGQEIRDGKDIRVGDWVQVYRAGDVIPKIADVDLNKRPEGANPFEFPEQCPECGSPAIREEGDAVRRCTGGVICPAQAVEKLKHFVSRAAFDIEGLGAKQVEQFHADGWIREPADIFELRSRYGEGLQQLKNREGWGEKSATNLFQAIDDKRRIPLARLIFALGIRHVGEVGAKDLSLHYRDWDAMAAALDTARLAALAHRAADTAEEQERQQAQAEGRRARISDTRAAVIAAQEVPPEAAAAWADLIGVDGIGATLGLSLSDAFANGDERAAFDRLSAHLTVIPPDAPARDSPVAGKTVVFTGSLEKMTRAEAKARAEALGAKVAGSVSKKTDLLVAGPGAGSKLKTAESLGIETLDEDGWLKLIEGL</sequence>